<sequence length="597" mass="66046">MTTQTPNGFTLDNAGKRIVVDPVTRIEGHMRCEVNVNDQGIITNAVSTGTMWRGLEVILKGRDPRDAWAFTERICGVCTGTHALTSVRAVESALGITIPDNANSIRNMMQLNLQIHDHIVHFYHLHALDWVNPVNALRADPKATSELQQMVSPSHPLSSPGYFRDVQNRLKKFVESGQLGLFKNGYWDNPAYKLPPEADLMATTHYLEALDLQKEVVKVHTIFGGKNPHPNWLVGGVPCPINVDGVGAVGAINMERLNLVSSIIDRCTEFTRNVYLPDLKAIGGFYKEWLYGGGLSGQSVLSYGDIPENPNDFSAGQLHLPRGAIINGNLNEVHDVDTTDPEQVQEFVDHSWYDYGEPGMGLHPWDGRTEPKFELGPNLKGTRTNIENIDEGAKYSWIKAPRWRGNAMEVGPLAATSSVTRKGHEDIKNQVEGLLRDMNLPVSALFSTLGRTAARALEAEYCCRLQKHFFDKLVTNIKNGDSSTANVEKWDPSTWPKEAKGVGMTEAPRGALGHWVKIKDGRIENYQCVVPTTWNGSPRDSKGNIGAFEASLLNTKMERPEEPVEILRTLHSFDPCLACSTHVMSAEGAPLTTVKVR</sequence>
<name>MBHL_RHOCA</name>
<comment type="function">
    <text>This enzyme recycles the H(2) produced by nitrogenase to increase the production of ATP and to protect nitrogenase against inhibition or damage by O(2) under carbon- or phosphate-limited conditions.</text>
</comment>
<comment type="catalytic activity">
    <reaction>
        <text>H2 + A = AH2</text>
        <dbReference type="Rhea" id="RHEA:12116"/>
        <dbReference type="ChEBI" id="CHEBI:13193"/>
        <dbReference type="ChEBI" id="CHEBI:17499"/>
        <dbReference type="ChEBI" id="CHEBI:18276"/>
        <dbReference type="EC" id="1.12.99.6"/>
    </reaction>
</comment>
<comment type="cofactor">
    <cofactor evidence="1">
        <name>Ni(2+)</name>
        <dbReference type="ChEBI" id="CHEBI:49786"/>
    </cofactor>
    <text evidence="1">Binds 1 nickel ion per subunit.</text>
</comment>
<comment type="subunit">
    <text>Heterodimer of a large and a small subunit.</text>
</comment>
<comment type="subcellular location">
    <subcellularLocation>
        <location>Cell membrane</location>
        <topology>Peripheral membrane protein</topology>
    </subcellularLocation>
</comment>
<comment type="similarity">
    <text evidence="3">Belongs to the [NiFe]/[NiFeSe] hydrogenase large subunit family.</text>
</comment>
<dbReference type="EC" id="1.12.99.6"/>
<dbReference type="EMBL" id="X13520">
    <property type="protein sequence ID" value="CAA31870.1"/>
    <property type="molecule type" value="Genomic_DNA"/>
</dbReference>
<dbReference type="PIR" id="S08317">
    <property type="entry name" value="S08317"/>
</dbReference>
<dbReference type="SMR" id="P15284"/>
<dbReference type="GO" id="GO:0005886">
    <property type="term" value="C:plasma membrane"/>
    <property type="evidence" value="ECO:0007669"/>
    <property type="project" value="UniProtKB-SubCell"/>
</dbReference>
<dbReference type="GO" id="GO:0008901">
    <property type="term" value="F:ferredoxin hydrogenase activity"/>
    <property type="evidence" value="ECO:0007669"/>
    <property type="project" value="InterPro"/>
</dbReference>
<dbReference type="GO" id="GO:0033748">
    <property type="term" value="F:hydrogenase (acceptor) activity"/>
    <property type="evidence" value="ECO:0007669"/>
    <property type="project" value="UniProtKB-EC"/>
</dbReference>
<dbReference type="GO" id="GO:0016151">
    <property type="term" value="F:nickel cation binding"/>
    <property type="evidence" value="ECO:0007669"/>
    <property type="project" value="InterPro"/>
</dbReference>
<dbReference type="FunFam" id="1.10.645.10:FF:000002">
    <property type="entry name" value="Hydrogenase 2 large subunit"/>
    <property type="match status" value="1"/>
</dbReference>
<dbReference type="Gene3D" id="1.10.645.10">
    <property type="entry name" value="Cytochrome-c3 Hydrogenase, chain B"/>
    <property type="match status" value="1"/>
</dbReference>
<dbReference type="InterPro" id="IPR001501">
    <property type="entry name" value="Ni-dep_hyd_lsu"/>
</dbReference>
<dbReference type="InterPro" id="IPR018194">
    <property type="entry name" value="Ni-dep_hyd_lsu_Ni_BS"/>
</dbReference>
<dbReference type="InterPro" id="IPR029014">
    <property type="entry name" value="NiFe-Hase_large"/>
</dbReference>
<dbReference type="InterPro" id="IPR050867">
    <property type="entry name" value="NiFe/NiFeSe_hydrgnase_LSU"/>
</dbReference>
<dbReference type="PANTHER" id="PTHR42958">
    <property type="entry name" value="HYDROGENASE-2 LARGE CHAIN"/>
    <property type="match status" value="1"/>
</dbReference>
<dbReference type="PANTHER" id="PTHR42958:SF2">
    <property type="entry name" value="UPTAKE HYDROGENASE LARGE SUBUNIT"/>
    <property type="match status" value="1"/>
</dbReference>
<dbReference type="Pfam" id="PF00374">
    <property type="entry name" value="NiFeSe_Hases"/>
    <property type="match status" value="1"/>
</dbReference>
<dbReference type="SUPFAM" id="SSF56762">
    <property type="entry name" value="HydB/Nqo4-like"/>
    <property type="match status" value="1"/>
</dbReference>
<dbReference type="PROSITE" id="PS00507">
    <property type="entry name" value="NI_HGENASE_L_1"/>
    <property type="match status" value="1"/>
</dbReference>
<dbReference type="PROSITE" id="PS00508">
    <property type="entry name" value="NI_HGENASE_L_2"/>
    <property type="match status" value="1"/>
</dbReference>
<gene>
    <name type="primary">hupB</name>
    <name type="synonym">hupL</name>
</gene>
<organism>
    <name type="scientific">Rhodobacter capsulatus</name>
    <name type="common">Rhodopseudomonas capsulata</name>
    <dbReference type="NCBI Taxonomy" id="1061"/>
    <lineage>
        <taxon>Bacteria</taxon>
        <taxon>Pseudomonadati</taxon>
        <taxon>Pseudomonadota</taxon>
        <taxon>Alphaproteobacteria</taxon>
        <taxon>Rhodobacterales</taxon>
        <taxon>Rhodobacter group</taxon>
        <taxon>Rhodobacter</taxon>
    </lineage>
</organism>
<accession>P15284</accession>
<proteinExistence type="inferred from homology"/>
<feature type="chain" id="PRO_0000199716" description="Uptake hydrogenase large subunit">
    <location>
        <begin position="1"/>
        <end position="597"/>
    </location>
</feature>
<feature type="binding site" evidence="2">
    <location>
        <position position="75"/>
    </location>
    <ligand>
        <name>Ni(2+)</name>
        <dbReference type="ChEBI" id="CHEBI:49786"/>
    </ligand>
</feature>
<feature type="binding site" evidence="2">
    <location>
        <position position="78"/>
    </location>
    <ligand>
        <name>Ni(2+)</name>
        <dbReference type="ChEBI" id="CHEBI:49786"/>
    </ligand>
</feature>
<feature type="binding site" evidence="2">
    <location>
        <position position="576"/>
    </location>
    <ligand>
        <name>Ni(2+)</name>
        <dbReference type="ChEBI" id="CHEBI:49786"/>
    </ligand>
</feature>
<feature type="binding site" evidence="2">
    <location>
        <position position="579"/>
    </location>
    <ligand>
        <name>Ni(2+)</name>
        <dbReference type="ChEBI" id="CHEBI:49786"/>
    </ligand>
</feature>
<evidence type="ECO:0000250" key="1"/>
<evidence type="ECO:0000255" key="2"/>
<evidence type="ECO:0000305" key="3"/>
<keyword id="KW-1003">Cell membrane</keyword>
<keyword id="KW-0472">Membrane</keyword>
<keyword id="KW-0479">Metal-binding</keyword>
<keyword id="KW-0533">Nickel</keyword>
<keyword id="KW-0560">Oxidoreductase</keyword>
<reference key="1">
    <citation type="journal article" date="1988" name="Mol. Gen. Genet.">
        <title>Cloning and sequencing of the genes encoding the large and the small subunits of the H2 uptake hydrogenase (hup) of Rhodobacter capsulatus.</title>
        <authorList>
            <person name="Leclerc M."/>
            <person name="Colbeau A."/>
            <person name="Cauvin B."/>
            <person name="Vignais P.M."/>
        </authorList>
    </citation>
    <scope>NUCLEOTIDE SEQUENCE [GENOMIC DNA]</scope>
    <source>
        <strain>ATCC 33303 / B10</strain>
    </source>
</reference>
<reference key="2">
    <citation type="journal article" date="1989" name="Mol. Gen. Genet.">
        <authorList>
            <person name="Leclerc M."/>
            <person name="Colbeau A."/>
            <person name="Cauvin B."/>
            <person name="Vignais P.M."/>
        </authorList>
    </citation>
    <scope>ERRATUM OF PUBMED:3067084</scope>
    <scope>SEQUENCE REVISION</scope>
</reference>
<protein>
    <recommendedName>
        <fullName>Uptake hydrogenase large subunit</fullName>
        <ecNumber>1.12.99.6</ecNumber>
    </recommendedName>
    <alternativeName>
        <fullName>Hydrogenlyase</fullName>
    </alternativeName>
    <alternativeName>
        <fullName>Membrane-bound hydrogenase large subunit</fullName>
    </alternativeName>
</protein>